<dbReference type="EC" id="2.7.7.8" evidence="1"/>
<dbReference type="EMBL" id="AP008957">
    <property type="protein sequence ID" value="BAH33352.1"/>
    <property type="molecule type" value="Genomic_DNA"/>
</dbReference>
<dbReference type="RefSeq" id="WP_020907444.1">
    <property type="nucleotide sequence ID" value="NC_012490.1"/>
</dbReference>
<dbReference type="SMR" id="C0ZYB7"/>
<dbReference type="KEGG" id="rer:RER_26440"/>
<dbReference type="eggNOG" id="COG1185">
    <property type="taxonomic scope" value="Bacteria"/>
</dbReference>
<dbReference type="HOGENOM" id="CLU_004217_2_2_11"/>
<dbReference type="Proteomes" id="UP000002204">
    <property type="component" value="Chromosome"/>
</dbReference>
<dbReference type="GO" id="GO:0005829">
    <property type="term" value="C:cytosol"/>
    <property type="evidence" value="ECO:0007669"/>
    <property type="project" value="TreeGrafter"/>
</dbReference>
<dbReference type="GO" id="GO:0000175">
    <property type="term" value="F:3'-5'-RNA exonuclease activity"/>
    <property type="evidence" value="ECO:0007669"/>
    <property type="project" value="TreeGrafter"/>
</dbReference>
<dbReference type="GO" id="GO:0000287">
    <property type="term" value="F:magnesium ion binding"/>
    <property type="evidence" value="ECO:0007669"/>
    <property type="project" value="UniProtKB-UniRule"/>
</dbReference>
<dbReference type="GO" id="GO:0004654">
    <property type="term" value="F:polyribonucleotide nucleotidyltransferase activity"/>
    <property type="evidence" value="ECO:0007669"/>
    <property type="project" value="UniProtKB-UniRule"/>
</dbReference>
<dbReference type="GO" id="GO:0003723">
    <property type="term" value="F:RNA binding"/>
    <property type="evidence" value="ECO:0007669"/>
    <property type="project" value="UniProtKB-UniRule"/>
</dbReference>
<dbReference type="GO" id="GO:0006402">
    <property type="term" value="P:mRNA catabolic process"/>
    <property type="evidence" value="ECO:0007669"/>
    <property type="project" value="UniProtKB-UniRule"/>
</dbReference>
<dbReference type="GO" id="GO:0006396">
    <property type="term" value="P:RNA processing"/>
    <property type="evidence" value="ECO:0007669"/>
    <property type="project" value="InterPro"/>
</dbReference>
<dbReference type="CDD" id="cd02393">
    <property type="entry name" value="KH-I_PNPase"/>
    <property type="match status" value="1"/>
</dbReference>
<dbReference type="CDD" id="cd11364">
    <property type="entry name" value="RNase_PH_PNPase_2"/>
    <property type="match status" value="1"/>
</dbReference>
<dbReference type="CDD" id="cd04472">
    <property type="entry name" value="S1_PNPase"/>
    <property type="match status" value="1"/>
</dbReference>
<dbReference type="FunFam" id="2.40.50.140:FF:000069">
    <property type="entry name" value="Polyribonucleotide nucleotidyltransferase"/>
    <property type="match status" value="1"/>
</dbReference>
<dbReference type="FunFam" id="3.30.1370.10:FF:000001">
    <property type="entry name" value="Polyribonucleotide nucleotidyltransferase"/>
    <property type="match status" value="1"/>
</dbReference>
<dbReference type="FunFam" id="3.30.230.70:FF:000001">
    <property type="entry name" value="Polyribonucleotide nucleotidyltransferase"/>
    <property type="match status" value="1"/>
</dbReference>
<dbReference type="FunFam" id="3.30.230.70:FF:000002">
    <property type="entry name" value="Polyribonucleotide nucleotidyltransferase"/>
    <property type="match status" value="1"/>
</dbReference>
<dbReference type="Gene3D" id="3.30.230.70">
    <property type="entry name" value="GHMP Kinase, N-terminal domain"/>
    <property type="match status" value="2"/>
</dbReference>
<dbReference type="Gene3D" id="3.30.1370.10">
    <property type="entry name" value="K Homology domain, type 1"/>
    <property type="match status" value="1"/>
</dbReference>
<dbReference type="Gene3D" id="2.40.50.140">
    <property type="entry name" value="Nucleic acid-binding proteins"/>
    <property type="match status" value="1"/>
</dbReference>
<dbReference type="HAMAP" id="MF_01595">
    <property type="entry name" value="PNPase"/>
    <property type="match status" value="1"/>
</dbReference>
<dbReference type="InterPro" id="IPR001247">
    <property type="entry name" value="ExoRNase_PH_dom1"/>
</dbReference>
<dbReference type="InterPro" id="IPR036345">
    <property type="entry name" value="ExoRNase_PH_dom2_sf"/>
</dbReference>
<dbReference type="InterPro" id="IPR014069">
    <property type="entry name" value="GPSI/PNP"/>
</dbReference>
<dbReference type="InterPro" id="IPR004087">
    <property type="entry name" value="KH_dom"/>
</dbReference>
<dbReference type="InterPro" id="IPR004088">
    <property type="entry name" value="KH_dom_type_1"/>
</dbReference>
<dbReference type="InterPro" id="IPR036612">
    <property type="entry name" value="KH_dom_type_1_sf"/>
</dbReference>
<dbReference type="InterPro" id="IPR012340">
    <property type="entry name" value="NA-bd_OB-fold"/>
</dbReference>
<dbReference type="InterPro" id="IPR012162">
    <property type="entry name" value="PNPase"/>
</dbReference>
<dbReference type="InterPro" id="IPR027408">
    <property type="entry name" value="PNPase/RNase_PH_dom_sf"/>
</dbReference>
<dbReference type="InterPro" id="IPR015848">
    <property type="entry name" value="PNPase_PH_RNA-bd_bac/org-type"/>
</dbReference>
<dbReference type="InterPro" id="IPR036456">
    <property type="entry name" value="PNPase_PH_RNA-bd_sf"/>
</dbReference>
<dbReference type="InterPro" id="IPR020568">
    <property type="entry name" value="Ribosomal_Su5_D2-typ_SF"/>
</dbReference>
<dbReference type="InterPro" id="IPR003029">
    <property type="entry name" value="S1_domain"/>
</dbReference>
<dbReference type="NCBIfam" id="TIGR03591">
    <property type="entry name" value="polynuc_phos"/>
    <property type="match status" value="1"/>
</dbReference>
<dbReference type="NCBIfam" id="TIGR02696">
    <property type="entry name" value="pppGpp_PNP"/>
    <property type="match status" value="1"/>
</dbReference>
<dbReference type="NCBIfam" id="NF008805">
    <property type="entry name" value="PRK11824.1"/>
    <property type="match status" value="1"/>
</dbReference>
<dbReference type="PANTHER" id="PTHR11252">
    <property type="entry name" value="POLYRIBONUCLEOTIDE NUCLEOTIDYLTRANSFERASE"/>
    <property type="match status" value="1"/>
</dbReference>
<dbReference type="PANTHER" id="PTHR11252:SF0">
    <property type="entry name" value="POLYRIBONUCLEOTIDE NUCLEOTIDYLTRANSFERASE 1, MITOCHONDRIAL"/>
    <property type="match status" value="1"/>
</dbReference>
<dbReference type="Pfam" id="PF00013">
    <property type="entry name" value="KH_1"/>
    <property type="match status" value="1"/>
</dbReference>
<dbReference type="Pfam" id="PF03726">
    <property type="entry name" value="PNPase"/>
    <property type="match status" value="1"/>
</dbReference>
<dbReference type="Pfam" id="PF01138">
    <property type="entry name" value="RNase_PH"/>
    <property type="match status" value="2"/>
</dbReference>
<dbReference type="Pfam" id="PF00575">
    <property type="entry name" value="S1"/>
    <property type="match status" value="1"/>
</dbReference>
<dbReference type="PIRSF" id="PIRSF005499">
    <property type="entry name" value="PNPase"/>
    <property type="match status" value="1"/>
</dbReference>
<dbReference type="SMART" id="SM00322">
    <property type="entry name" value="KH"/>
    <property type="match status" value="1"/>
</dbReference>
<dbReference type="SMART" id="SM00316">
    <property type="entry name" value="S1"/>
    <property type="match status" value="1"/>
</dbReference>
<dbReference type="SUPFAM" id="SSF54791">
    <property type="entry name" value="Eukaryotic type KH-domain (KH-domain type I)"/>
    <property type="match status" value="1"/>
</dbReference>
<dbReference type="SUPFAM" id="SSF50249">
    <property type="entry name" value="Nucleic acid-binding proteins"/>
    <property type="match status" value="1"/>
</dbReference>
<dbReference type="SUPFAM" id="SSF46915">
    <property type="entry name" value="Polynucleotide phosphorylase/guanosine pentaphosphate synthase (PNPase/GPSI), domain 3"/>
    <property type="match status" value="1"/>
</dbReference>
<dbReference type="SUPFAM" id="SSF55666">
    <property type="entry name" value="Ribonuclease PH domain 2-like"/>
    <property type="match status" value="2"/>
</dbReference>
<dbReference type="SUPFAM" id="SSF54211">
    <property type="entry name" value="Ribosomal protein S5 domain 2-like"/>
    <property type="match status" value="2"/>
</dbReference>
<dbReference type="PROSITE" id="PS50084">
    <property type="entry name" value="KH_TYPE_1"/>
    <property type="match status" value="1"/>
</dbReference>
<dbReference type="PROSITE" id="PS50126">
    <property type="entry name" value="S1"/>
    <property type="match status" value="1"/>
</dbReference>
<protein>
    <recommendedName>
        <fullName evidence="1">Polyribonucleotide nucleotidyltransferase</fullName>
        <ecNumber evidence="1">2.7.7.8</ecNumber>
    </recommendedName>
    <alternativeName>
        <fullName evidence="1">Polynucleotide phosphorylase</fullName>
        <shortName evidence="1">PNPase</shortName>
    </alternativeName>
</protein>
<gene>
    <name evidence="1" type="primary">pnp</name>
    <name type="ordered locus">RER_26440</name>
</gene>
<reference key="1">
    <citation type="submission" date="2005-03" db="EMBL/GenBank/DDBJ databases">
        <title>Comparison of the complete genome sequences of Rhodococcus erythropolis PR4 and Rhodococcus opacus B4.</title>
        <authorList>
            <person name="Takarada H."/>
            <person name="Sekine M."/>
            <person name="Hosoyama A."/>
            <person name="Yamada R."/>
            <person name="Fujisawa T."/>
            <person name="Omata S."/>
            <person name="Shimizu A."/>
            <person name="Tsukatani N."/>
            <person name="Tanikawa S."/>
            <person name="Fujita N."/>
            <person name="Harayama S."/>
        </authorList>
    </citation>
    <scope>NUCLEOTIDE SEQUENCE [LARGE SCALE GENOMIC DNA]</scope>
    <source>
        <strain>PR4 / NBRC 100887</strain>
    </source>
</reference>
<feature type="chain" id="PRO_0000381914" description="Polyribonucleotide nucleotidyltransferase">
    <location>
        <begin position="1"/>
        <end position="756"/>
    </location>
</feature>
<feature type="domain" description="KH" evidence="1">
    <location>
        <begin position="598"/>
        <end position="657"/>
    </location>
</feature>
<feature type="domain" description="S1 motif" evidence="1">
    <location>
        <begin position="669"/>
        <end position="738"/>
    </location>
</feature>
<feature type="binding site" evidence="1">
    <location>
        <position position="532"/>
    </location>
    <ligand>
        <name>Mg(2+)</name>
        <dbReference type="ChEBI" id="CHEBI:18420"/>
    </ligand>
</feature>
<feature type="binding site" evidence="1">
    <location>
        <position position="538"/>
    </location>
    <ligand>
        <name>Mg(2+)</name>
        <dbReference type="ChEBI" id="CHEBI:18420"/>
    </ligand>
</feature>
<accession>C0ZYB7</accession>
<proteinExistence type="inferred from homology"/>
<comment type="function">
    <text evidence="1">Involved in mRNA degradation. Catalyzes the phosphorolysis of single-stranded polyribonucleotides processively in the 3'- to 5'-direction.</text>
</comment>
<comment type="catalytic activity">
    <reaction evidence="1">
        <text>RNA(n+1) + phosphate = RNA(n) + a ribonucleoside 5'-diphosphate</text>
        <dbReference type="Rhea" id="RHEA:22096"/>
        <dbReference type="Rhea" id="RHEA-COMP:14527"/>
        <dbReference type="Rhea" id="RHEA-COMP:17342"/>
        <dbReference type="ChEBI" id="CHEBI:43474"/>
        <dbReference type="ChEBI" id="CHEBI:57930"/>
        <dbReference type="ChEBI" id="CHEBI:140395"/>
        <dbReference type="EC" id="2.7.7.8"/>
    </reaction>
</comment>
<comment type="cofactor">
    <cofactor evidence="1">
        <name>Mg(2+)</name>
        <dbReference type="ChEBI" id="CHEBI:18420"/>
    </cofactor>
</comment>
<comment type="subcellular location">
    <subcellularLocation>
        <location evidence="1">Cytoplasm</location>
    </subcellularLocation>
</comment>
<comment type="similarity">
    <text evidence="1">Belongs to the polyribonucleotide nucleotidyltransferase family.</text>
</comment>
<sequence length="756" mass="80040">MTENSVVEVDEGVFESTAVIDNGSFGTRTIRFETGRLAQQAAGAVVAYLDDETMLLSATSASKHPKEHFDFFPLTVDVEERMYAAGRIPGSFFRREGRPSTDAILTCRLIDRPLRPSFVDGLRNEIQVVVTVMSLNPQDLYDVVAINAASASTQIAGLPFSGPVGGVRVALIVSEDNKAGQWVAFPTVDQLENAVFDMVVAGRVVSGSGDNADVAIMMVEAEATDNVIAKIADGAQAPTEAIVAEGLEAAKPFIARLCAAQAALASKAAKPTGDYPVFPAYQDDVFAAVEAAASEKLNAALTIAGKQERDDKTDEVKVEVLEQVAPNFEGREKELGAAFRSLTKKLVRQRILRDQFRIDGRGVTDIRSLSAEVAIIPRAHGSALFERGETQILGVTTLDMVKMAQQVDSLGPETTKRYMHHYNFPPYSTGETGRVGSPKRREIGHGALAERALMPVLPSVEEFPYAIRQVSEALSSNGSTSMGSVCASTLALLNAGVPLRAPVAGIAMGLVSDQVDGETRYVALTDILGAEDAFGDMDFKVAGTKDFVTALQLDTKLDGIPSQVLAGALSQAKDARTTILEVMAEAIDTPDEMSPFAPRVTAIKVPVDKIGEVIGPKGKMINSITEQTGANISIEDDGTVFVGATDGPSAQAAIDMINAIANPQLPKVGERFLGTVVKTTAFGAFVSLLPGRDGLVHISKLGSGKRIAKVEDVVNVGSKIRVEIADIDARGKISLIPVEEGNDEAAAPAADEAASE</sequence>
<keyword id="KW-0963">Cytoplasm</keyword>
<keyword id="KW-0460">Magnesium</keyword>
<keyword id="KW-0479">Metal-binding</keyword>
<keyword id="KW-0548">Nucleotidyltransferase</keyword>
<keyword id="KW-0694">RNA-binding</keyword>
<keyword id="KW-0808">Transferase</keyword>
<evidence type="ECO:0000255" key="1">
    <source>
        <dbReference type="HAMAP-Rule" id="MF_01595"/>
    </source>
</evidence>
<name>PNP_RHOE4</name>
<organism>
    <name type="scientific">Rhodococcus erythropolis (strain PR4 / NBRC 100887)</name>
    <dbReference type="NCBI Taxonomy" id="234621"/>
    <lineage>
        <taxon>Bacteria</taxon>
        <taxon>Bacillati</taxon>
        <taxon>Actinomycetota</taxon>
        <taxon>Actinomycetes</taxon>
        <taxon>Mycobacteriales</taxon>
        <taxon>Nocardiaceae</taxon>
        <taxon>Rhodococcus</taxon>
        <taxon>Rhodococcus erythropolis group</taxon>
    </lineage>
</organism>